<comment type="subcellular location">
    <subcellularLocation>
        <location evidence="1">Cytoplasm</location>
    </subcellularLocation>
</comment>
<comment type="similarity">
    <text evidence="1">Belongs to the TACO1 family.</text>
</comment>
<reference key="1">
    <citation type="journal article" date="2011" name="PLoS ONE">
        <title>The genome of Akkermansia muciniphila, a dedicated intestinal mucin degrader, and its use in exploring intestinal metagenomes.</title>
        <authorList>
            <person name="van Passel M.W."/>
            <person name="Kant R."/>
            <person name="Zoetendal E.G."/>
            <person name="Plugge C.M."/>
            <person name="Derrien M."/>
            <person name="Malfatti S.A."/>
            <person name="Chain P.S."/>
            <person name="Woyke T."/>
            <person name="Palva A."/>
            <person name="de Vos W.M."/>
            <person name="Smidt H."/>
        </authorList>
    </citation>
    <scope>NUCLEOTIDE SEQUENCE [LARGE SCALE GENOMIC DNA]</scope>
    <source>
        <strain>ATCC BAA-835 / DSM 22959 / JCM 33894 / BCRC 81048 / CCUG 64013 / CIP 107961 / Muc</strain>
    </source>
</reference>
<accession>B2UQ11</accession>
<gene>
    <name type="ordered locus">Amuc_0709</name>
</gene>
<proteinExistence type="inferred from homology"/>
<name>Y709_AKKM8</name>
<feature type="chain" id="PRO_1000132145" description="Probable transcriptional regulatory protein Amuc_0709">
    <location>
        <begin position="1"/>
        <end position="251"/>
    </location>
</feature>
<protein>
    <recommendedName>
        <fullName evidence="1">Probable transcriptional regulatory protein Amuc_0709</fullName>
    </recommendedName>
</protein>
<organism>
    <name type="scientific">Akkermansia muciniphila (strain ATCC BAA-835 / DSM 22959 / JCM 33894 / BCRC 81048 / CCUG 64013 / CIP 107961 / Muc)</name>
    <dbReference type="NCBI Taxonomy" id="349741"/>
    <lineage>
        <taxon>Bacteria</taxon>
        <taxon>Pseudomonadati</taxon>
        <taxon>Verrucomicrobiota</taxon>
        <taxon>Verrucomicrobiia</taxon>
        <taxon>Verrucomicrobiales</taxon>
        <taxon>Akkermansiaceae</taxon>
        <taxon>Akkermansia</taxon>
    </lineage>
</organism>
<keyword id="KW-0963">Cytoplasm</keyword>
<keyword id="KW-0238">DNA-binding</keyword>
<keyword id="KW-1185">Reference proteome</keyword>
<keyword id="KW-0804">Transcription</keyword>
<keyword id="KW-0805">Transcription regulation</keyword>
<sequence length="251" mass="26926">MSGHNKWSKIKYVKAKEDAKKGKVFARFAHEIMLAAKSGGGDPDLNPRLRAAIDGAKAVSTPKENIERAIKKGTGELGGATIQEITYEGYGPSGTAFLIEVATDNTNRSASELRTLFTKNGGSIGTPGSVAYQFERKGEARIMAEGLTEDSAMDLALECGADDVEQGDSDNEWVFVTSPTELNNVCAALREAGHTVISMKLISVAQNASVINDLETAKAALRLYEALDDYDDALNVFSNFDVAEEILEQLG</sequence>
<evidence type="ECO:0000255" key="1">
    <source>
        <dbReference type="HAMAP-Rule" id="MF_00693"/>
    </source>
</evidence>
<dbReference type="EMBL" id="CP001071">
    <property type="protein sequence ID" value="ACD04546.1"/>
    <property type="molecule type" value="Genomic_DNA"/>
</dbReference>
<dbReference type="RefSeq" id="WP_012419761.1">
    <property type="nucleotide sequence ID" value="NZ_CP071807.1"/>
</dbReference>
<dbReference type="SMR" id="B2UQ11"/>
<dbReference type="STRING" id="349741.Amuc_0709"/>
<dbReference type="PaxDb" id="349741-Amuc_0709"/>
<dbReference type="KEGG" id="amu:Amuc_0709"/>
<dbReference type="eggNOG" id="COG0217">
    <property type="taxonomic scope" value="Bacteria"/>
</dbReference>
<dbReference type="HOGENOM" id="CLU_062974_2_2_0"/>
<dbReference type="OrthoDB" id="9781053at2"/>
<dbReference type="BioCyc" id="AMUC349741:G1GBX-771-MONOMER"/>
<dbReference type="Proteomes" id="UP000001031">
    <property type="component" value="Chromosome"/>
</dbReference>
<dbReference type="GO" id="GO:0005829">
    <property type="term" value="C:cytosol"/>
    <property type="evidence" value="ECO:0007669"/>
    <property type="project" value="TreeGrafter"/>
</dbReference>
<dbReference type="GO" id="GO:0003677">
    <property type="term" value="F:DNA binding"/>
    <property type="evidence" value="ECO:0007669"/>
    <property type="project" value="UniProtKB-UniRule"/>
</dbReference>
<dbReference type="GO" id="GO:0006355">
    <property type="term" value="P:regulation of DNA-templated transcription"/>
    <property type="evidence" value="ECO:0007669"/>
    <property type="project" value="UniProtKB-UniRule"/>
</dbReference>
<dbReference type="FunFam" id="1.10.10.200:FF:000002">
    <property type="entry name" value="Probable transcriptional regulatory protein CLM62_37755"/>
    <property type="match status" value="1"/>
</dbReference>
<dbReference type="Gene3D" id="1.10.10.200">
    <property type="match status" value="1"/>
</dbReference>
<dbReference type="Gene3D" id="3.30.70.980">
    <property type="match status" value="2"/>
</dbReference>
<dbReference type="HAMAP" id="MF_00693">
    <property type="entry name" value="Transcrip_reg_TACO1"/>
    <property type="match status" value="1"/>
</dbReference>
<dbReference type="InterPro" id="IPR017856">
    <property type="entry name" value="Integrase-like_N"/>
</dbReference>
<dbReference type="InterPro" id="IPR048300">
    <property type="entry name" value="TACO1_YebC-like_2nd/3rd_dom"/>
</dbReference>
<dbReference type="InterPro" id="IPR049083">
    <property type="entry name" value="TACO1_YebC_N"/>
</dbReference>
<dbReference type="InterPro" id="IPR002876">
    <property type="entry name" value="Transcrip_reg_TACO1-like"/>
</dbReference>
<dbReference type="InterPro" id="IPR026564">
    <property type="entry name" value="Transcrip_reg_TACO1-like_dom3"/>
</dbReference>
<dbReference type="InterPro" id="IPR029072">
    <property type="entry name" value="YebC-like"/>
</dbReference>
<dbReference type="NCBIfam" id="NF001030">
    <property type="entry name" value="PRK00110.1"/>
    <property type="match status" value="1"/>
</dbReference>
<dbReference type="NCBIfam" id="NF009044">
    <property type="entry name" value="PRK12378.1"/>
    <property type="match status" value="1"/>
</dbReference>
<dbReference type="NCBIfam" id="TIGR01033">
    <property type="entry name" value="YebC/PmpR family DNA-binding transcriptional regulator"/>
    <property type="match status" value="1"/>
</dbReference>
<dbReference type="PANTHER" id="PTHR12532:SF6">
    <property type="entry name" value="TRANSCRIPTIONAL REGULATORY PROTEIN YEBC-RELATED"/>
    <property type="match status" value="1"/>
</dbReference>
<dbReference type="PANTHER" id="PTHR12532">
    <property type="entry name" value="TRANSLATIONAL ACTIVATOR OF CYTOCHROME C OXIDASE 1"/>
    <property type="match status" value="1"/>
</dbReference>
<dbReference type="Pfam" id="PF20772">
    <property type="entry name" value="TACO1_YebC_N"/>
    <property type="match status" value="1"/>
</dbReference>
<dbReference type="Pfam" id="PF01709">
    <property type="entry name" value="Transcrip_reg"/>
    <property type="match status" value="1"/>
</dbReference>
<dbReference type="SUPFAM" id="SSF75625">
    <property type="entry name" value="YebC-like"/>
    <property type="match status" value="1"/>
</dbReference>